<evidence type="ECO:0000250" key="1">
    <source>
        <dbReference type="UniProtKB" id="P14925"/>
    </source>
</evidence>
<evidence type="ECO:0000250" key="2">
    <source>
        <dbReference type="UniProtKB" id="P19021"/>
    </source>
</evidence>
<evidence type="ECO:0000255" key="3"/>
<evidence type="ECO:0000256" key="4">
    <source>
        <dbReference type="SAM" id="MobiDB-lite"/>
    </source>
</evidence>
<evidence type="ECO:0000269" key="5">
    <source>
    </source>
</evidence>
<evidence type="ECO:0000303" key="6">
    <source>
    </source>
</evidence>
<evidence type="ECO:0000305" key="7"/>
<comment type="function">
    <text evidence="1 2 5">Bifunctional enzyme that catalyzes amidation of the C-terminus of proteins (By similarity). Alpha-amidation is present at the C-terminus of many endocrine hormones and neuropeptides and is required for their activity (PubMed:2059626). C-terminal amidation also takes place in response to protein fragmentation triggered by oxidative stress, promoting degradation of amidated protein fragments by the proteasome (By similarity). Alpha-amidation involves two sequential reactions, both of which are catalyzed by separate catalytic domains of the enzyme (By similarity). The first step, catalyzed by peptidyl alpha-hydroxylating monooxygenase (PHM) domain, is the copper-, ascorbate-, and O2- dependent stereospecific hydroxylation (with S stereochemistry) at the alpha-carbon (C-alpha) of the C-terminal glycine of the peptidylglycine substrate (By similarity). The second step, catalyzed by the peptidylglycine amidoglycolate lyase (PAL) domain, is the zinc-dependent cleavage of the N-C-alpha bond, producing the alpha-amidated peptide and glyoxylate (PubMed:2059626). Similarly, catalyzes the two-step conversion of an N-fatty acylglycine to a primary fatty acid amide and glyoxylate (By similarity).</text>
</comment>
<comment type="catalytic activity">
    <reaction evidence="5">
        <text>a [peptide]-C-terminal glycine + 2 L-ascorbate + O2 = a [peptide]-C-terminal (2S)-2-hydroxyglycine + 2 monodehydro-L-ascorbate radical + H2O</text>
        <dbReference type="Rhea" id="RHEA:21452"/>
        <dbReference type="Rhea" id="RHEA-COMP:13486"/>
        <dbReference type="Rhea" id="RHEA-COMP:15321"/>
        <dbReference type="ChEBI" id="CHEBI:15377"/>
        <dbReference type="ChEBI" id="CHEBI:15379"/>
        <dbReference type="ChEBI" id="CHEBI:38290"/>
        <dbReference type="ChEBI" id="CHEBI:59513"/>
        <dbReference type="ChEBI" id="CHEBI:137000"/>
        <dbReference type="ChEBI" id="CHEBI:142768"/>
        <dbReference type="EC" id="1.14.17.3"/>
    </reaction>
</comment>
<comment type="catalytic activity">
    <reaction evidence="5">
        <text>a [peptide]-C-terminal (2S)-2-hydroxyglycine = a [peptide]-C-terminal amide + glyoxylate</text>
        <dbReference type="Rhea" id="RHEA:20924"/>
        <dbReference type="Rhea" id="RHEA-COMP:13485"/>
        <dbReference type="Rhea" id="RHEA-COMP:15321"/>
        <dbReference type="ChEBI" id="CHEBI:36655"/>
        <dbReference type="ChEBI" id="CHEBI:137001"/>
        <dbReference type="ChEBI" id="CHEBI:142768"/>
        <dbReference type="EC" id="4.3.2.5"/>
    </reaction>
</comment>
<comment type="catalytic activity">
    <reaction evidence="1">
        <text>N-dodecanoylglycine + 2 L-ascorbate + O2 = N-dodecanoyl-(2S)-hydroxyglycine + 2 monodehydro-L-ascorbate radical + H2O</text>
        <dbReference type="Rhea" id="RHEA:58540"/>
        <dbReference type="ChEBI" id="CHEBI:15377"/>
        <dbReference type="ChEBI" id="CHEBI:15379"/>
        <dbReference type="ChEBI" id="CHEBI:38290"/>
        <dbReference type="ChEBI" id="CHEBI:59513"/>
        <dbReference type="ChEBI" id="CHEBI:142678"/>
        <dbReference type="ChEBI" id="CHEBI:142693"/>
    </reaction>
</comment>
<comment type="catalytic activity">
    <reaction evidence="1">
        <text>N-dodecanoyl-(2S)-hydroxyglycine = dodecanamide + glyoxylate</text>
        <dbReference type="Rhea" id="RHEA:58624"/>
        <dbReference type="ChEBI" id="CHEBI:34726"/>
        <dbReference type="ChEBI" id="CHEBI:36655"/>
        <dbReference type="ChEBI" id="CHEBI:142693"/>
    </reaction>
</comment>
<comment type="catalytic activity">
    <reaction evidence="1">
        <text>N-(9Z,12Z,15Z)-octadecatrienoylglycine + 2 L-ascorbate + O2 = N-(9Z,12Z,15Z)-octadecatrienoyl-(2S)-hydroxyglycine + 2 monodehydro-L-ascorbate radical + H2O</text>
        <dbReference type="Rhea" id="RHEA:58548"/>
        <dbReference type="ChEBI" id="CHEBI:15377"/>
        <dbReference type="ChEBI" id="CHEBI:15379"/>
        <dbReference type="ChEBI" id="CHEBI:38290"/>
        <dbReference type="ChEBI" id="CHEBI:59513"/>
        <dbReference type="ChEBI" id="CHEBI:142679"/>
        <dbReference type="ChEBI" id="CHEBI:142697"/>
    </reaction>
</comment>
<comment type="catalytic activity">
    <reaction evidence="1">
        <text>N-(9Z,12Z,15Z)-octadecatrienoyl-(2S)-hydroxyglycine = (9Z,12Z,15Z)-octadecatrienamide + glyoxylate</text>
        <dbReference type="Rhea" id="RHEA:58644"/>
        <dbReference type="ChEBI" id="CHEBI:36655"/>
        <dbReference type="ChEBI" id="CHEBI:142684"/>
        <dbReference type="ChEBI" id="CHEBI:142697"/>
    </reaction>
</comment>
<comment type="catalytic activity">
    <reaction evidence="1">
        <text>N-(9Z-octadecenoyl)glycine + 2 L-ascorbate + O2 = N-(9Z-octadecenoyl)-(2S)-hydroxyglycine + 2 monodehydro-L-ascorbate radical + H2O</text>
        <dbReference type="Rhea" id="RHEA:58600"/>
        <dbReference type="ChEBI" id="CHEBI:15377"/>
        <dbReference type="ChEBI" id="CHEBI:15379"/>
        <dbReference type="ChEBI" id="CHEBI:38290"/>
        <dbReference type="ChEBI" id="CHEBI:59513"/>
        <dbReference type="ChEBI" id="CHEBI:133992"/>
        <dbReference type="ChEBI" id="CHEBI:142696"/>
    </reaction>
</comment>
<comment type="catalytic activity">
    <reaction evidence="1">
        <text>N-(9Z-octadecenoyl)-(2S)-hydroxyglycine = (9Z)-octadecenamide + glyoxylate</text>
        <dbReference type="Rhea" id="RHEA:58636"/>
        <dbReference type="ChEBI" id="CHEBI:36655"/>
        <dbReference type="ChEBI" id="CHEBI:116314"/>
        <dbReference type="ChEBI" id="CHEBI:142696"/>
    </reaction>
</comment>
<comment type="catalytic activity">
    <reaction evidence="1">
        <text>N-tetradecanoylglycine + 2 L-ascorbate + O2 = N-tetradecanoyl-(2S)-hydroxyglycine + 2 monodehydro-L-ascorbate radical + H2O</text>
        <dbReference type="Rhea" id="RHEA:58544"/>
        <dbReference type="ChEBI" id="CHEBI:15377"/>
        <dbReference type="ChEBI" id="CHEBI:15379"/>
        <dbReference type="ChEBI" id="CHEBI:38290"/>
        <dbReference type="ChEBI" id="CHEBI:59513"/>
        <dbReference type="ChEBI" id="CHEBI:86500"/>
        <dbReference type="ChEBI" id="CHEBI:142694"/>
    </reaction>
</comment>
<comment type="catalytic activity">
    <reaction evidence="1">
        <text>N-tetradecanoyl-(2S)-hydroxyglycine = tetradecamide + glyoxylate</text>
        <dbReference type="Rhea" id="RHEA:58632"/>
        <dbReference type="ChEBI" id="CHEBI:36655"/>
        <dbReference type="ChEBI" id="CHEBI:137125"/>
        <dbReference type="ChEBI" id="CHEBI:142694"/>
    </reaction>
</comment>
<comment type="catalytic activity">
    <reaction evidence="1">
        <text>N-decanoylglycine + 2 L-ascorbate + O2 = N-decanoyl-(2S)-hydroxyglycine + 2 monodehydro-L-ascorbate radical + H2O</text>
        <dbReference type="Rhea" id="RHEA:58608"/>
        <dbReference type="ChEBI" id="CHEBI:15377"/>
        <dbReference type="ChEBI" id="CHEBI:15379"/>
        <dbReference type="ChEBI" id="CHEBI:38290"/>
        <dbReference type="ChEBI" id="CHEBI:59513"/>
        <dbReference type="ChEBI" id="CHEBI:142680"/>
        <dbReference type="ChEBI" id="CHEBI:142692"/>
    </reaction>
</comment>
<comment type="catalytic activity">
    <reaction evidence="1">
        <text>N-decanoyl-(2S)-hydroxyglycine = decanamide + glyoxylate</text>
        <dbReference type="Rhea" id="RHEA:58620"/>
        <dbReference type="ChEBI" id="CHEBI:36655"/>
        <dbReference type="ChEBI" id="CHEBI:38833"/>
        <dbReference type="ChEBI" id="CHEBI:142692"/>
    </reaction>
</comment>
<comment type="catalytic activity">
    <reaction evidence="1">
        <text>N-octanoylglycine + 2 L-ascorbate + O2 = N-octanoyl-(2S)-hydroxyglycine + 2 monodehydro-L-ascorbate radical + H2O</text>
        <dbReference type="Rhea" id="RHEA:58612"/>
        <dbReference type="ChEBI" id="CHEBI:15377"/>
        <dbReference type="ChEBI" id="CHEBI:15379"/>
        <dbReference type="ChEBI" id="CHEBI:38290"/>
        <dbReference type="ChEBI" id="CHEBI:59513"/>
        <dbReference type="ChEBI" id="CHEBI:142681"/>
        <dbReference type="ChEBI" id="CHEBI:142691"/>
    </reaction>
</comment>
<comment type="catalytic activity">
    <reaction evidence="1">
        <text>N-octanoyl-(2S)-hydroxyglycine = octanamide + glyoxylate</text>
        <dbReference type="Rhea" id="RHEA:58616"/>
        <dbReference type="ChEBI" id="CHEBI:36655"/>
        <dbReference type="ChEBI" id="CHEBI:142682"/>
        <dbReference type="ChEBI" id="CHEBI:142691"/>
    </reaction>
</comment>
<comment type="cofactor">
    <cofactor evidence="1">
        <name>Zn(2+)</name>
        <dbReference type="ChEBI" id="CHEBI:29105"/>
    </cofactor>
    <text evidence="1">Binds one Zn(2+) ion per subunit.</text>
</comment>
<comment type="cofactor">
    <cofactor evidence="5">
        <name>Cu(2+)</name>
        <dbReference type="ChEBI" id="CHEBI:29036"/>
    </cofactor>
    <text evidence="1">Binds 2 Cu(2+) ions per subunit.</text>
</comment>
<comment type="activity regulation">
    <text evidence="1 2">PAM activity is inhibited by EDTA, phenylglyoxal and diethyl pyrocarbonate (By similarity). PAL activity is stimulated by cadmium and inhibited by mercury (By similarity).</text>
</comment>
<comment type="biophysicochemical properties">
    <phDependence>
        <text evidence="5">Optimally active at acidic pHs.</text>
    </phDependence>
</comment>
<comment type="subunit">
    <text evidence="1">Monomer. Interacts with RASSF9.</text>
</comment>
<comment type="subcellular location">
    <subcellularLocation>
        <location evidence="5">Cytoplasmic vesicle</location>
        <location evidence="5">Secretory vesicle membrane</location>
        <topology evidence="5">Single-pass membrane protein</topology>
    </subcellularLocation>
    <text evidence="5">Secretory granules.</text>
</comment>
<comment type="similarity">
    <text evidence="7">In the C-terminal section; belongs to the peptidyl-alpha-hydroxyglycine alpha-amidating lyase family.</text>
</comment>
<comment type="similarity">
    <text evidence="7">In the N-terminal section; belongs to the copper type II ascorbate-dependent monooxygenase family.</text>
</comment>
<protein>
    <recommendedName>
        <fullName evidence="2">Peptidyl-glycine alpha-amidating monooxygenase</fullName>
        <shortName evidence="6">PAM</shortName>
    </recommendedName>
    <domain>
        <recommendedName>
            <fullName evidence="2">Peptidylglycine alpha-hydroxylating monooxygenase</fullName>
            <shortName evidence="2">PHM</shortName>
            <ecNumber evidence="5">1.14.17.3</ecNumber>
        </recommendedName>
    </domain>
    <domain>
        <recommendedName>
            <fullName>Peptidyl-alpha-hydroxyglycine alpha-amidating lyase</fullName>
            <ecNumber evidence="5">4.3.2.5</ecNumber>
        </recommendedName>
        <alternativeName>
            <fullName evidence="2">Peptidylamidoglycolate lyase</fullName>
            <shortName evidence="2">PAL</shortName>
        </alternativeName>
    </domain>
</protein>
<organism>
    <name type="scientific">Bos taurus</name>
    <name type="common">Bovine</name>
    <dbReference type="NCBI Taxonomy" id="9913"/>
    <lineage>
        <taxon>Eukaryota</taxon>
        <taxon>Metazoa</taxon>
        <taxon>Chordata</taxon>
        <taxon>Craniata</taxon>
        <taxon>Vertebrata</taxon>
        <taxon>Euteleostomi</taxon>
        <taxon>Mammalia</taxon>
        <taxon>Eutheria</taxon>
        <taxon>Laurasiatheria</taxon>
        <taxon>Artiodactyla</taxon>
        <taxon>Ruminantia</taxon>
        <taxon>Pecora</taxon>
        <taxon>Bovidae</taxon>
        <taxon>Bovinae</taxon>
        <taxon>Bos</taxon>
    </lineage>
</organism>
<proteinExistence type="evidence at protein level"/>
<accession>P10731</accession>
<name>AMD_BOVIN</name>
<feature type="signal peptide" evidence="3">
    <location>
        <begin position="1"/>
        <end position="20"/>
    </location>
</feature>
<feature type="propeptide" id="PRO_0000006359" evidence="3">
    <location>
        <begin position="21"/>
        <end position="30"/>
    </location>
</feature>
<feature type="chain" id="PRO_0000006360" description="Peptidyl-glycine alpha-amidating monooxygenase">
    <location>
        <begin position="31"/>
        <end position="972"/>
    </location>
</feature>
<feature type="topological domain" description="Intragranular" evidence="3">
    <location>
        <begin position="31"/>
        <end position="873"/>
    </location>
</feature>
<feature type="transmembrane region" description="Helical" evidence="3">
    <location>
        <begin position="874"/>
        <end position="897"/>
    </location>
</feature>
<feature type="topological domain" description="Cytoplasmic" evidence="3">
    <location>
        <begin position="898"/>
        <end position="972"/>
    </location>
</feature>
<feature type="repeat" description="NHL 1">
    <location>
        <begin position="498"/>
        <end position="541"/>
    </location>
</feature>
<feature type="repeat" description="NHL 2">
    <location>
        <begin position="567"/>
        <end position="608"/>
    </location>
</feature>
<feature type="repeat" description="NHL 3">
    <location>
        <begin position="617"/>
        <end position="662"/>
    </location>
</feature>
<feature type="repeat" description="NHL 4">
    <location>
        <begin position="670"/>
        <end position="714"/>
    </location>
</feature>
<feature type="repeat" description="NHL 5">
    <location>
        <begin position="766"/>
        <end position="809"/>
    </location>
</feature>
<feature type="region of interest" description="Peptidylglycine alpha-hydroxylating monooxygenase" evidence="1">
    <location>
        <begin position="1"/>
        <end position="494"/>
    </location>
</feature>
<feature type="region of interest" description="Peptidyl-alpha-hydroxyglycine alpha-amidating lyase" evidence="1">
    <location>
        <begin position="495"/>
        <end position="817"/>
    </location>
</feature>
<feature type="region of interest" description="Interaction with RASSF9" evidence="1">
    <location>
        <begin position="925"/>
        <end position="942"/>
    </location>
</feature>
<feature type="region of interest" description="Disordered" evidence="4">
    <location>
        <begin position="937"/>
        <end position="972"/>
    </location>
</feature>
<feature type="compositionally biased region" description="Acidic residues" evidence="4">
    <location>
        <begin position="949"/>
        <end position="961"/>
    </location>
</feature>
<feature type="compositionally biased region" description="Pro residues" evidence="4">
    <location>
        <begin position="963"/>
        <end position="972"/>
    </location>
</feature>
<feature type="binding site" evidence="1">
    <location>
        <position position="102"/>
    </location>
    <ligand>
        <name>Cu(2+)</name>
        <dbReference type="ChEBI" id="CHEBI:29036"/>
        <label>1</label>
        <note>catalytic</note>
    </ligand>
</feature>
<feature type="binding site" evidence="1">
    <location>
        <position position="103"/>
    </location>
    <ligand>
        <name>Cu(2+)</name>
        <dbReference type="ChEBI" id="CHEBI:29036"/>
        <label>1</label>
        <note>catalytic</note>
    </ligand>
</feature>
<feature type="binding site" evidence="1">
    <location>
        <position position="167"/>
    </location>
    <ligand>
        <name>Cu(2+)</name>
        <dbReference type="ChEBI" id="CHEBI:29036"/>
        <label>1</label>
        <note>catalytic</note>
    </ligand>
</feature>
<feature type="binding site" evidence="1">
    <location>
        <position position="237"/>
    </location>
    <ligand>
        <name>Cu(2+)</name>
        <dbReference type="ChEBI" id="CHEBI:29036"/>
        <label>2</label>
        <note>catalytic</note>
    </ligand>
</feature>
<feature type="binding site" evidence="1">
    <location>
        <position position="239"/>
    </location>
    <ligand>
        <name>Cu(2+)</name>
        <dbReference type="ChEBI" id="CHEBI:29036"/>
        <label>2</label>
        <note>catalytic</note>
    </ligand>
</feature>
<feature type="binding site" evidence="1">
    <location>
        <position position="309"/>
    </location>
    <ligand>
        <name>Cu(2+)</name>
        <dbReference type="ChEBI" id="CHEBI:29036"/>
        <label>2</label>
        <note>catalytic</note>
    </ligand>
</feature>
<feature type="binding site" evidence="1">
    <location>
        <position position="517"/>
    </location>
    <ligand>
        <name>Ca(2+)</name>
        <dbReference type="ChEBI" id="CHEBI:29108"/>
        <note>structural</note>
    </ligand>
</feature>
<feature type="binding site" evidence="1">
    <location>
        <position position="530"/>
    </location>
    <ligand>
        <name>a protein</name>
        <dbReference type="ChEBI" id="CHEBI:16541"/>
    </ligand>
    <ligandPart>
        <name>C-terminal Xaa-(2S)-2-hydroxyglycine residue</name>
        <dbReference type="ChEBI" id="CHEBI:142768"/>
    </ligandPart>
</feature>
<feature type="binding site" evidence="1">
    <location>
        <position position="582"/>
    </location>
    <ligand>
        <name>Zn(2+)</name>
        <dbReference type="ChEBI" id="CHEBI:29105"/>
        <note>catalytic</note>
    </ligand>
</feature>
<feature type="binding site" evidence="1">
    <location>
        <position position="584"/>
    </location>
    <ligand>
        <name>Ca(2+)</name>
        <dbReference type="ChEBI" id="CHEBI:29108"/>
        <note>structural</note>
    </ligand>
</feature>
<feature type="binding site" evidence="1">
    <location>
        <position position="651"/>
    </location>
    <ligand>
        <name>a protein</name>
        <dbReference type="ChEBI" id="CHEBI:16541"/>
    </ligand>
    <ligandPart>
        <name>C-terminal Xaa-(2S)-2-hydroxyglycine residue</name>
        <dbReference type="ChEBI" id="CHEBI:142768"/>
    </ligandPart>
</feature>
<feature type="binding site" evidence="1">
    <location>
        <position position="687"/>
    </location>
    <ligand>
        <name>Zn(2+)</name>
        <dbReference type="ChEBI" id="CHEBI:29105"/>
        <note>catalytic</note>
    </ligand>
</feature>
<feature type="binding site" evidence="1">
    <location>
        <position position="703"/>
    </location>
    <ligand>
        <name>a protein</name>
        <dbReference type="ChEBI" id="CHEBI:16541"/>
    </ligand>
    <ligandPart>
        <name>C-terminal Xaa-(2S)-2-hydroxyglycine residue</name>
        <dbReference type="ChEBI" id="CHEBI:142768"/>
    </ligandPart>
</feature>
<feature type="binding site" evidence="1">
    <location>
        <position position="783"/>
    </location>
    <ligand>
        <name>Zn(2+)</name>
        <dbReference type="ChEBI" id="CHEBI:29105"/>
        <note>catalytic</note>
    </ligand>
</feature>
<feature type="binding site" evidence="1">
    <location>
        <position position="784"/>
    </location>
    <ligand>
        <name>Ca(2+)</name>
        <dbReference type="ChEBI" id="CHEBI:29108"/>
        <note>structural</note>
    </ligand>
</feature>
<feature type="modified residue" description="Phosphoserine" evidence="2">
    <location>
        <position position="929"/>
    </location>
</feature>
<feature type="modified residue" description="Phosphoserine" evidence="2">
    <location>
        <position position="942"/>
    </location>
</feature>
<feature type="modified residue" description="Phosphothreonine" evidence="2">
    <location>
        <position position="943"/>
    </location>
</feature>
<feature type="modified residue" description="Phosphoserine; by UHMK1" evidence="2">
    <location>
        <position position="946"/>
    </location>
</feature>
<feature type="modified residue" description="Phosphoserine" evidence="1">
    <location>
        <position position="957"/>
    </location>
</feature>
<feature type="glycosylation site" description="N-linked (GlcNAc...) asparagine" evidence="3">
    <location>
        <position position="762"/>
    </location>
</feature>
<feature type="disulfide bond" evidence="1">
    <location>
        <begin position="42"/>
        <end position="181"/>
    </location>
</feature>
<feature type="disulfide bond" evidence="1">
    <location>
        <begin position="76"/>
        <end position="121"/>
    </location>
</feature>
<feature type="disulfide bond" evidence="1">
    <location>
        <begin position="109"/>
        <end position="126"/>
    </location>
</feature>
<feature type="disulfide bond" evidence="1">
    <location>
        <begin position="222"/>
        <end position="329"/>
    </location>
</feature>
<feature type="disulfide bond" evidence="1">
    <location>
        <begin position="288"/>
        <end position="310"/>
    </location>
</feature>
<feature type="disulfide bond" evidence="1">
    <location>
        <begin position="631"/>
        <end position="652"/>
    </location>
</feature>
<feature type="disulfide bond" evidence="1">
    <location>
        <begin position="699"/>
        <end position="710"/>
    </location>
</feature>
<sequence>MAGFRSLLVLLLVFPSGCVGFRSPLSVFKRFKETTRSFSNECLGTTRPVIPIDSSDFALDIRMPGVTPKQSDTYFCMSVRLPMDEEAFVIDFKPRASMDTVHHMLLFGCNMPASTGNYWFCDEGTCTDKANILYAWARNAPPTRLPKGVGFRVGGETGSKYFVLQVHYGDISAFRDNHKDCSGVSLHLTRLPQPLIAGMYLMMSVDTVIPPGGKVVNSDISCHYKKYPMHVFAYRVHTHHLGKVVSGYRVRNGQWTLIGRQSPQLPQAFYPVEHPVDVSFGDILAARCVFTGEGRTEVTHIGGTSSDEMCNLYIMYYMEAKHAVSFMTCTQNVAPDIFRTIPPEANIPIPVKSDMVMMHGHHKETENKDKTSLLQQPKREEEGVLEQGDFYSLLSKLLGEREDVVHVHKYNPTEKAESESDLVAEIANVVQKKDLGRSDTRESAEQERGNAILVRDRIHKFHRLVSTLRPAESRVLSLQQPLPGEGTWEPEHTGDFHVEEALDWPGVYLLPGQVSGVALDPQNNLVIFHRGDHVWDGNSFDSKFVYQQRGLGPIEEDTILVIDPNNAAVLQSSGKNLFYLPHGLSIDKDGNYWVTDVALHQVFKLDPKSKEGPLLTLGRSMQPGSDQNHFCQPTDVAVDPDTGTIYVSDGYCNSRLVQFSPSGKFITQWGEASLESSPKPGQFRVPHSLALVPPLGQLCVADRENGRIQCFKTDTKEFVREIKHPSFGRNVFAISYIPGLLFAVNGKPYFEDQEPVQGFVMNFSSGEIIDVFKPVRKHFDMPHDIAASEDGTVYVGDAHTNTVWKFTSTEKMEHRSVKKAGIEVQEIKESEAVVETKMENKPASSELQKIQEKQKLVKEPGSGVPAVLITTLLVIPVVVLLAIALFIRWKKSRAFGDSERKLEASSGRVLGRLRGKGGGGLNLGNFFASRKGYSRKGFDRLSTEGSDQEKDEDASESEEEYSAPPPAPAPSS</sequence>
<reference key="1">
    <citation type="journal article" date="1987" name="Mol. Endocrinol.">
        <title>Structure of the precursor to an enzyme mediating COOH-terminal amidation in peptide biosynthesis.</title>
        <authorList>
            <person name="Eipper B.A."/>
            <person name="Park L.P."/>
            <person name="Dickerson I.M."/>
            <person name="Keutmann H.T."/>
            <person name="Thiele E.A."/>
            <person name="Rodriguez H."/>
            <person name="Schofield P.R."/>
            <person name="Mains R.E."/>
        </authorList>
    </citation>
    <scope>NUCLEOTIDE SEQUENCE [MRNA]</scope>
    <scope>PARTIAL PROTEIN SEQUENCE</scope>
    <source>
        <tissue>Pituitary</tissue>
    </source>
</reference>
<reference key="2">
    <citation type="journal article" date="1991" name="Biochemistry">
        <title>Functional and structural characterization of peptidylamidoglycolate lyase, the enzyme catalyzing the second step in peptide amidation.</title>
        <authorList>
            <person name="Katopodis A.G."/>
            <person name="Ping D.S."/>
            <person name="Smith C.E."/>
            <person name="May S.W."/>
        </authorList>
    </citation>
    <scope>PROTEIN SEQUENCE OF 478-499; 544-575; 611-630 AND 665-695</scope>
    <scope>FUNCTION</scope>
    <scope>SUBCELLULAR LOCATION</scope>
    <scope>CATALYTIC ACTIVITY</scope>
    <scope>COFACTOR</scope>
    <scope>BIOPHYSICOCHEMICAL PROPERTIES</scope>
</reference>
<gene>
    <name type="primary">PAM</name>
</gene>
<dbReference type="EC" id="1.14.17.3" evidence="5"/>
<dbReference type="EC" id="4.3.2.5" evidence="5"/>
<dbReference type="EMBL" id="M18683">
    <property type="protein sequence ID" value="AAA30683.1"/>
    <property type="molecule type" value="mRNA"/>
</dbReference>
<dbReference type="PIR" id="A40063">
    <property type="entry name" value="URBOAP"/>
</dbReference>
<dbReference type="RefSeq" id="NP_776373.1">
    <property type="nucleotide sequence ID" value="NM_173948.2"/>
</dbReference>
<dbReference type="SMR" id="P10731"/>
<dbReference type="FunCoup" id="P10731">
    <property type="interactions" value="228"/>
</dbReference>
<dbReference type="MINT" id="P10731"/>
<dbReference type="STRING" id="9913.ENSBTAP00000016466"/>
<dbReference type="GlyCosmos" id="P10731">
    <property type="glycosylation" value="1 site, No reported glycans"/>
</dbReference>
<dbReference type="GlyGen" id="P10731">
    <property type="glycosylation" value="1 site"/>
</dbReference>
<dbReference type="PaxDb" id="9913-ENSBTAP00000016466"/>
<dbReference type="GeneID" id="280890"/>
<dbReference type="KEGG" id="bta:280890"/>
<dbReference type="CTD" id="5066"/>
<dbReference type="eggNOG" id="KOG3567">
    <property type="taxonomic scope" value="Eukaryota"/>
</dbReference>
<dbReference type="InParanoid" id="P10731"/>
<dbReference type="OrthoDB" id="10018185at2759"/>
<dbReference type="SABIO-RK" id="P10731"/>
<dbReference type="Proteomes" id="UP000009136">
    <property type="component" value="Unplaced"/>
</dbReference>
<dbReference type="GO" id="GO:0005576">
    <property type="term" value="C:extracellular region"/>
    <property type="evidence" value="ECO:0000318"/>
    <property type="project" value="GO_Central"/>
</dbReference>
<dbReference type="GO" id="GO:0030667">
    <property type="term" value="C:secretory granule membrane"/>
    <property type="evidence" value="ECO:0000314"/>
    <property type="project" value="UniProtKB"/>
</dbReference>
<dbReference type="GO" id="GO:0030658">
    <property type="term" value="C:transport vesicle membrane"/>
    <property type="evidence" value="ECO:0007669"/>
    <property type="project" value="UniProtKB-SubCell"/>
</dbReference>
<dbReference type="GO" id="GO:0005509">
    <property type="term" value="F:calcium ion binding"/>
    <property type="evidence" value="ECO:0000250"/>
    <property type="project" value="UniProtKB"/>
</dbReference>
<dbReference type="GO" id="GO:0005507">
    <property type="term" value="F:copper ion binding"/>
    <property type="evidence" value="ECO:0000250"/>
    <property type="project" value="UniProtKB"/>
</dbReference>
<dbReference type="GO" id="GO:0031418">
    <property type="term" value="F:L-ascorbic acid binding"/>
    <property type="evidence" value="ECO:0007669"/>
    <property type="project" value="UniProtKB-KW"/>
</dbReference>
<dbReference type="GO" id="GO:0004598">
    <property type="term" value="F:peptidylamidoglycolate lyase activity"/>
    <property type="evidence" value="ECO:0000314"/>
    <property type="project" value="UniProtKB"/>
</dbReference>
<dbReference type="GO" id="GO:0004504">
    <property type="term" value="F:peptidylglycine monooxygenase activity"/>
    <property type="evidence" value="ECO:0000314"/>
    <property type="project" value="UniProtKB"/>
</dbReference>
<dbReference type="GO" id="GO:0008270">
    <property type="term" value="F:zinc ion binding"/>
    <property type="evidence" value="ECO:0000250"/>
    <property type="project" value="UniProtKB"/>
</dbReference>
<dbReference type="GO" id="GO:0062112">
    <property type="term" value="P:fatty acid primary amide biosynthetic process"/>
    <property type="evidence" value="ECO:0000250"/>
    <property type="project" value="UniProtKB"/>
</dbReference>
<dbReference type="GO" id="GO:0001519">
    <property type="term" value="P:peptide amidation"/>
    <property type="evidence" value="ECO:0000314"/>
    <property type="project" value="UniProtKB"/>
</dbReference>
<dbReference type="CDD" id="cd14958">
    <property type="entry name" value="NHL_PAL_like"/>
    <property type="match status" value="1"/>
</dbReference>
<dbReference type="FunFam" id="2.60.120.230:FF:000002">
    <property type="entry name" value="Peptidyl-glycine alpha-amidating monooxygenase B"/>
    <property type="match status" value="1"/>
</dbReference>
<dbReference type="FunFam" id="2.120.10.30:FF:000016">
    <property type="entry name" value="peptidyl-glycine alpha-amidating monooxygenase isoform X1"/>
    <property type="match status" value="1"/>
</dbReference>
<dbReference type="FunFam" id="2.60.120.310:FF:000001">
    <property type="entry name" value="peptidyl-glycine alpha-amidating monooxygenase isoform X1"/>
    <property type="match status" value="1"/>
</dbReference>
<dbReference type="Gene3D" id="2.60.120.230">
    <property type="match status" value="1"/>
</dbReference>
<dbReference type="Gene3D" id="2.60.120.310">
    <property type="entry name" value="Copper type II, ascorbate-dependent monooxygenase, N-terminal domain"/>
    <property type="match status" value="1"/>
</dbReference>
<dbReference type="Gene3D" id="2.120.10.30">
    <property type="entry name" value="TolB, C-terminal domain"/>
    <property type="match status" value="1"/>
</dbReference>
<dbReference type="InterPro" id="IPR011042">
    <property type="entry name" value="6-blade_b-propeller_TolB-like"/>
</dbReference>
<dbReference type="InterPro" id="IPR014784">
    <property type="entry name" value="Cu2_ascorb_mOase-like_C"/>
</dbReference>
<dbReference type="InterPro" id="IPR020611">
    <property type="entry name" value="Cu2_ascorb_mOase_CS-1"/>
</dbReference>
<dbReference type="InterPro" id="IPR014783">
    <property type="entry name" value="Cu2_ascorb_mOase_CS-2"/>
</dbReference>
<dbReference type="InterPro" id="IPR000323">
    <property type="entry name" value="Cu2_ascorb_mOase_N"/>
</dbReference>
<dbReference type="InterPro" id="IPR036939">
    <property type="entry name" value="Cu2_ascorb_mOase_N_sf"/>
</dbReference>
<dbReference type="InterPro" id="IPR024548">
    <property type="entry name" value="Cu2_monoox_C"/>
</dbReference>
<dbReference type="InterPro" id="IPR001258">
    <property type="entry name" value="NHL_repeat"/>
</dbReference>
<dbReference type="InterPro" id="IPR000720">
    <property type="entry name" value="PHM/PAL"/>
</dbReference>
<dbReference type="InterPro" id="IPR008977">
    <property type="entry name" value="PHM/PNGase_F_dom_sf"/>
</dbReference>
<dbReference type="PANTHER" id="PTHR10680">
    <property type="entry name" value="PEPTIDYL-GLYCINE ALPHA-AMIDATING MONOOXYGENASE"/>
    <property type="match status" value="1"/>
</dbReference>
<dbReference type="PANTHER" id="PTHR10680:SF14">
    <property type="entry name" value="PEPTIDYL-GLYCINE ALPHA-AMIDATING MONOOXYGENASE"/>
    <property type="match status" value="1"/>
</dbReference>
<dbReference type="Pfam" id="PF03712">
    <property type="entry name" value="Cu2_monoox_C"/>
    <property type="match status" value="1"/>
</dbReference>
<dbReference type="Pfam" id="PF01082">
    <property type="entry name" value="Cu2_monooxygen"/>
    <property type="match status" value="1"/>
</dbReference>
<dbReference type="Pfam" id="PF01436">
    <property type="entry name" value="NHL"/>
    <property type="match status" value="3"/>
</dbReference>
<dbReference type="PRINTS" id="PR00790">
    <property type="entry name" value="PAMONOXGNASE"/>
</dbReference>
<dbReference type="SUPFAM" id="SSF63829">
    <property type="entry name" value="Calcium-dependent phosphotriesterase"/>
    <property type="match status" value="1"/>
</dbReference>
<dbReference type="SUPFAM" id="SSF49742">
    <property type="entry name" value="PHM/PNGase F"/>
    <property type="match status" value="2"/>
</dbReference>
<dbReference type="PROSITE" id="PS00084">
    <property type="entry name" value="CU2_MONOOXYGENASE_1"/>
    <property type="match status" value="1"/>
</dbReference>
<dbReference type="PROSITE" id="PS00085">
    <property type="entry name" value="CU2_MONOOXYGENASE_2"/>
    <property type="match status" value="1"/>
</dbReference>
<dbReference type="PROSITE" id="PS51125">
    <property type="entry name" value="NHL"/>
    <property type="match status" value="5"/>
</dbReference>
<keyword id="KW-0106">Calcium</keyword>
<keyword id="KW-0165">Cleavage on pair of basic residues</keyword>
<keyword id="KW-0186">Copper</keyword>
<keyword id="KW-0968">Cytoplasmic vesicle</keyword>
<keyword id="KW-0903">Direct protein sequencing</keyword>
<keyword id="KW-1015">Disulfide bond</keyword>
<keyword id="KW-0325">Glycoprotein</keyword>
<keyword id="KW-0443">Lipid metabolism</keyword>
<keyword id="KW-0456">Lyase</keyword>
<keyword id="KW-0472">Membrane</keyword>
<keyword id="KW-0479">Metal-binding</keyword>
<keyword id="KW-0503">Monooxygenase</keyword>
<keyword id="KW-0511">Multifunctional enzyme</keyword>
<keyword id="KW-0560">Oxidoreductase</keyword>
<keyword id="KW-0597">Phosphoprotein</keyword>
<keyword id="KW-1185">Reference proteome</keyword>
<keyword id="KW-0677">Repeat</keyword>
<keyword id="KW-0732">Signal</keyword>
<keyword id="KW-0812">Transmembrane</keyword>
<keyword id="KW-1133">Transmembrane helix</keyword>
<keyword id="KW-0847">Vitamin C</keyword>
<keyword id="KW-0862">Zinc</keyword>